<keyword id="KW-0489">Methyltransferase</keyword>
<keyword id="KW-1185">Reference proteome</keyword>
<keyword id="KW-0949">S-adenosyl-L-methionine</keyword>
<keyword id="KW-0808">Transferase</keyword>
<keyword id="KW-0819">tRNA processing</keyword>
<reference key="1">
    <citation type="submission" date="2005-03" db="EMBL/GenBank/DDBJ databases">
        <title>Brevibacillus brevis strain 47, complete genome.</title>
        <authorList>
            <person name="Hosoyama A."/>
            <person name="Yamada R."/>
            <person name="Hongo Y."/>
            <person name="Terui Y."/>
            <person name="Ankai A."/>
            <person name="Masuyama W."/>
            <person name="Sekiguchi M."/>
            <person name="Takeda T."/>
            <person name="Asano K."/>
            <person name="Ohji S."/>
            <person name="Ichikawa N."/>
            <person name="Narita S."/>
            <person name="Aoki N."/>
            <person name="Miura H."/>
            <person name="Matsushita S."/>
            <person name="Sekigawa T."/>
            <person name="Yamagata H."/>
            <person name="Yoshikawa H."/>
            <person name="Udaka S."/>
            <person name="Tanikawa S."/>
            <person name="Fujita N."/>
        </authorList>
    </citation>
    <scope>NUCLEOTIDE SEQUENCE [LARGE SCALE GENOMIC DNA]</scope>
    <source>
        <strain>47 / JCM 6285 / NBRC 100599</strain>
    </source>
</reference>
<sequence>MRLRNIPGAEAALREYPTFVDNPLFYKGNWKERFGNNNPIHVEIGCGKGRFINTLAERHPDINFIAVELKAEVVLRAVQRTEYKAIPNLAFVQYDASKLTELFADHEISRIYLNFSDPWPKTRHAKRRLTYKSFLNTYRQVLVADGELHMKTDNENLFEFSLNQFAAERFQMRNITFDLHQSKLAADNVMTEYEERFSSRGQRIYRVEASCVIK</sequence>
<dbReference type="EC" id="2.1.1.33" evidence="2"/>
<dbReference type="EMBL" id="AP008955">
    <property type="protein sequence ID" value="BAH45259.1"/>
    <property type="molecule type" value="Genomic_DNA"/>
</dbReference>
<dbReference type="RefSeq" id="WP_015892525.1">
    <property type="nucleotide sequence ID" value="NC_012491.1"/>
</dbReference>
<dbReference type="SMR" id="C0ZHY5"/>
<dbReference type="STRING" id="358681.BBR47_42820"/>
<dbReference type="KEGG" id="bbe:BBR47_42820"/>
<dbReference type="eggNOG" id="COG0220">
    <property type="taxonomic scope" value="Bacteria"/>
</dbReference>
<dbReference type="HOGENOM" id="CLU_050910_2_1_9"/>
<dbReference type="UniPathway" id="UPA00989"/>
<dbReference type="Proteomes" id="UP000001877">
    <property type="component" value="Chromosome"/>
</dbReference>
<dbReference type="GO" id="GO:0043527">
    <property type="term" value="C:tRNA methyltransferase complex"/>
    <property type="evidence" value="ECO:0007669"/>
    <property type="project" value="TreeGrafter"/>
</dbReference>
<dbReference type="GO" id="GO:0008176">
    <property type="term" value="F:tRNA (guanine(46)-N7)-methyltransferase activity"/>
    <property type="evidence" value="ECO:0007669"/>
    <property type="project" value="UniProtKB-UniRule"/>
</dbReference>
<dbReference type="CDD" id="cd02440">
    <property type="entry name" value="AdoMet_MTases"/>
    <property type="match status" value="1"/>
</dbReference>
<dbReference type="FunFam" id="3.40.50.150:FF:000035">
    <property type="entry name" value="tRNA (guanine-N(7)-)-methyltransferase"/>
    <property type="match status" value="1"/>
</dbReference>
<dbReference type="Gene3D" id="3.40.50.150">
    <property type="entry name" value="Vaccinia Virus protein VP39"/>
    <property type="match status" value="1"/>
</dbReference>
<dbReference type="HAMAP" id="MF_01057">
    <property type="entry name" value="tRNA_methyltr_TrmB"/>
    <property type="match status" value="1"/>
</dbReference>
<dbReference type="InterPro" id="IPR029063">
    <property type="entry name" value="SAM-dependent_MTases_sf"/>
</dbReference>
<dbReference type="InterPro" id="IPR003358">
    <property type="entry name" value="tRNA_(Gua-N-7)_MeTrfase_Trmb"/>
</dbReference>
<dbReference type="InterPro" id="IPR055361">
    <property type="entry name" value="tRNA_methyltr_TrmB_bact"/>
</dbReference>
<dbReference type="NCBIfam" id="NF001080">
    <property type="entry name" value="PRK00121.2-2"/>
    <property type="match status" value="1"/>
</dbReference>
<dbReference type="NCBIfam" id="TIGR00091">
    <property type="entry name" value="tRNA (guanosine(46)-N7)-methyltransferase TrmB"/>
    <property type="match status" value="1"/>
</dbReference>
<dbReference type="PANTHER" id="PTHR23417">
    <property type="entry name" value="3-DEOXY-D-MANNO-OCTULOSONIC-ACID TRANSFERASE/TRNA GUANINE-N 7 - -METHYLTRANSFERASE"/>
    <property type="match status" value="1"/>
</dbReference>
<dbReference type="PANTHER" id="PTHR23417:SF14">
    <property type="entry name" value="PENTACOTRIPEPTIDE-REPEAT REGION OF PRORP DOMAIN-CONTAINING PROTEIN"/>
    <property type="match status" value="1"/>
</dbReference>
<dbReference type="Pfam" id="PF02390">
    <property type="entry name" value="Methyltransf_4"/>
    <property type="match status" value="1"/>
</dbReference>
<dbReference type="SUPFAM" id="SSF53335">
    <property type="entry name" value="S-adenosyl-L-methionine-dependent methyltransferases"/>
    <property type="match status" value="1"/>
</dbReference>
<dbReference type="PROSITE" id="PS51625">
    <property type="entry name" value="SAM_MT_TRMB"/>
    <property type="match status" value="1"/>
</dbReference>
<protein>
    <recommendedName>
        <fullName evidence="2">tRNA (guanine-N(7)-)-methyltransferase</fullName>
        <ecNumber evidence="2">2.1.1.33</ecNumber>
    </recommendedName>
    <alternativeName>
        <fullName evidence="2">tRNA (guanine(46)-N(7))-methyltransferase</fullName>
    </alternativeName>
    <alternativeName>
        <fullName evidence="2">tRNA(m7G46)-methyltransferase</fullName>
    </alternativeName>
</protein>
<comment type="function">
    <text evidence="2">Catalyzes the formation of N(7)-methylguanine at position 46 (m7G46) in tRNA.</text>
</comment>
<comment type="catalytic activity">
    <reaction evidence="2">
        <text>guanosine(46) in tRNA + S-adenosyl-L-methionine = N(7)-methylguanosine(46) in tRNA + S-adenosyl-L-homocysteine</text>
        <dbReference type="Rhea" id="RHEA:42708"/>
        <dbReference type="Rhea" id="RHEA-COMP:10188"/>
        <dbReference type="Rhea" id="RHEA-COMP:10189"/>
        <dbReference type="ChEBI" id="CHEBI:57856"/>
        <dbReference type="ChEBI" id="CHEBI:59789"/>
        <dbReference type="ChEBI" id="CHEBI:74269"/>
        <dbReference type="ChEBI" id="CHEBI:74480"/>
        <dbReference type="EC" id="2.1.1.33"/>
    </reaction>
</comment>
<comment type="pathway">
    <text evidence="2">tRNA modification; N(7)-methylguanine-tRNA biosynthesis.</text>
</comment>
<comment type="similarity">
    <text evidence="2">Belongs to the class I-like SAM-binding methyltransferase superfamily. TrmB family.</text>
</comment>
<evidence type="ECO:0000250" key="1"/>
<evidence type="ECO:0000255" key="2">
    <source>
        <dbReference type="HAMAP-Rule" id="MF_01057"/>
    </source>
</evidence>
<feature type="chain" id="PRO_1000149647" description="tRNA (guanine-N(7)-)-methyltransferase">
    <location>
        <begin position="1"/>
        <end position="214"/>
    </location>
</feature>
<feature type="active site" evidence="1">
    <location>
        <position position="117"/>
    </location>
</feature>
<feature type="binding site" evidence="2">
    <location>
        <position position="43"/>
    </location>
    <ligand>
        <name>S-adenosyl-L-methionine</name>
        <dbReference type="ChEBI" id="CHEBI:59789"/>
    </ligand>
</feature>
<feature type="binding site" evidence="2">
    <location>
        <position position="68"/>
    </location>
    <ligand>
        <name>S-adenosyl-L-methionine</name>
        <dbReference type="ChEBI" id="CHEBI:59789"/>
    </ligand>
</feature>
<feature type="binding site" evidence="2">
    <location>
        <position position="95"/>
    </location>
    <ligand>
        <name>S-adenosyl-L-methionine</name>
        <dbReference type="ChEBI" id="CHEBI:59789"/>
    </ligand>
</feature>
<feature type="binding site" evidence="2">
    <location>
        <position position="117"/>
    </location>
    <ligand>
        <name>S-adenosyl-L-methionine</name>
        <dbReference type="ChEBI" id="CHEBI:59789"/>
    </ligand>
</feature>
<feature type="binding site" evidence="2">
    <location>
        <position position="121"/>
    </location>
    <ligand>
        <name>substrate</name>
    </ligand>
</feature>
<feature type="binding site" evidence="2">
    <location>
        <position position="153"/>
    </location>
    <ligand>
        <name>substrate</name>
    </ligand>
</feature>
<feature type="binding site" evidence="2">
    <location>
        <begin position="191"/>
        <end position="194"/>
    </location>
    <ligand>
        <name>substrate</name>
    </ligand>
</feature>
<accession>C0ZHY5</accession>
<name>TRMB_BREBN</name>
<organism>
    <name type="scientific">Brevibacillus brevis (strain 47 / JCM 6285 / NBRC 100599)</name>
    <dbReference type="NCBI Taxonomy" id="358681"/>
    <lineage>
        <taxon>Bacteria</taxon>
        <taxon>Bacillati</taxon>
        <taxon>Bacillota</taxon>
        <taxon>Bacilli</taxon>
        <taxon>Bacillales</taxon>
        <taxon>Paenibacillaceae</taxon>
        <taxon>Brevibacillus</taxon>
    </lineage>
</organism>
<gene>
    <name evidence="2" type="primary">trmB</name>
    <name type="ordered locus">BBR47_42820</name>
</gene>
<proteinExistence type="inferred from homology"/>